<feature type="chain" id="PRO_0000262459" description="T-box transcription factor TBX1">
    <location>
        <begin position="1"/>
        <end position="460"/>
    </location>
</feature>
<feature type="DNA-binding region" description="T-box" evidence="3">
    <location>
        <begin position="116"/>
        <end position="294"/>
    </location>
</feature>
<feature type="region of interest" description="Disordered" evidence="4">
    <location>
        <begin position="30"/>
        <end position="53"/>
    </location>
</feature>
<feature type="region of interest" description="Disordered" evidence="4">
    <location>
        <begin position="67"/>
        <end position="99"/>
    </location>
</feature>
<feature type="region of interest" description="Disordered" evidence="4">
    <location>
        <begin position="317"/>
        <end position="355"/>
    </location>
</feature>
<feature type="region of interest" description="Disordered" evidence="4">
    <location>
        <begin position="376"/>
        <end position="400"/>
    </location>
</feature>
<feature type="short sequence motif" description="Nuclear localization signal" evidence="2">
    <location>
        <begin position="418"/>
        <end position="429"/>
    </location>
</feature>
<feature type="compositionally biased region" description="Polar residues" evidence="4">
    <location>
        <begin position="67"/>
        <end position="84"/>
    </location>
</feature>
<feature type="compositionally biased region" description="Polar residues" evidence="4">
    <location>
        <begin position="320"/>
        <end position="330"/>
    </location>
</feature>
<feature type="compositionally biased region" description="Basic and acidic residues" evidence="4">
    <location>
        <begin position="331"/>
        <end position="344"/>
    </location>
</feature>
<feature type="sequence conflict" description="In Ref. 1; AAP33907." evidence="7" ref="1">
    <original>G</original>
    <variation>R</variation>
    <location>
        <position position="371"/>
    </location>
</feature>
<sequence length="460" mass="51551">MISAISSPWLTQLSHFCDVAAFTTSSLSSLNTPGSYHLSPSPGDPYSHHESQFEPCPAAQHAYNYSGSNSAQAPAQGDSGTSNCSSSSSSSTPNKTLVKKNPKVANINVQLEMKALWDEFNQLGTEMIVTKAGRRMFPTFQVKIFGMDPMADYMLLMDFLPVDDKRYRYAFHSSSWLVAGKADPATPGRVHYHPDSPAKGAQWMKQIVSFDKLKLTNNLLDDNGHIILNSMHRYQPRFHVVYVDPRKDSEKYAEENYKTFVFEETRFTAVTAYQNHRITQLKIASNPFAKGFRDCDPEDWPRNHRPGSLQIMSAFARTRNPMSSPPQQNGTEKEDSRREYDRDPSGNPLHSDPTHQLMSRVLSPALPVLGGLHAVPLTAGPRSPPHELRLDGHPQPPDTLHHHPYKYPATYEHYLGAKTRPSPYPSPSIRGHGYHPHMNPTTANMYSATSAPTNYDYGPR</sequence>
<keyword id="KW-0217">Developmental protein</keyword>
<keyword id="KW-0238">DNA-binding</keyword>
<keyword id="KW-0539">Nucleus</keyword>
<keyword id="KW-1185">Reference proteome</keyword>
<keyword id="KW-0804">Transcription</keyword>
<keyword id="KW-0805">Transcription regulation</keyword>
<proteinExistence type="evidence at transcript level"/>
<reference key="1">
    <citation type="journal article" date="2003" name="Gene Expr. Patterns">
        <title>Cloning and characterization of zebrafish tbx1.</title>
        <authorList>
            <person name="Kochilas L.K."/>
            <person name="Potluri V."/>
            <person name="Gitler A."/>
            <person name="Balasubramanian K."/>
            <person name="Chin A.J."/>
        </authorList>
    </citation>
    <scope>NUCLEOTIDE SEQUENCE [MRNA]</scope>
    <scope>DEVELOPMENTAL STAGE</scope>
</reference>
<reference key="2">
    <citation type="journal article" date="2003" name="Development">
        <title>The zebrafish van gogh mutation disrupts tbx1, which is involved in the DiGeorge deletion syndrome in humans.</title>
        <authorList>
            <person name="Piotrowski T."/>
            <person name="Ahn D.-G."/>
            <person name="Schilling T.F."/>
            <person name="Nair S."/>
            <person name="Ruvinsky I."/>
            <person name="Geisler R."/>
            <person name="Rauch G.-J."/>
            <person name="Haffter P."/>
            <person name="Zon L.I."/>
            <person name="Zhou Y."/>
            <person name="Foott H."/>
            <person name="Dawid I.B."/>
            <person name="Ho R.K."/>
        </authorList>
    </citation>
    <scope>NUCLEOTIDE SEQUENCE [MRNA]</scope>
    <scope>FUNCTION</scope>
    <scope>TISSUE SPECIFICITY</scope>
    <scope>DISRUPTION PHENOTYPE</scope>
</reference>
<reference key="3">
    <citation type="submission" date="2002-09" db="EMBL/GenBank/DDBJ databases">
        <title>Cloning and expression of zebrafish Tbx1.</title>
        <authorList>
            <person name="Boetel T."/>
            <person name="Wessels J."/>
            <person name="von der Ohe M."/>
            <person name="Maity S."/>
            <person name="Behn-Krappa A."/>
            <person name="Haardt M."/>
        </authorList>
    </citation>
    <scope>NUCLEOTIDE SEQUENCE [MRNA]</scope>
</reference>
<reference key="4">
    <citation type="submission" date="2002-12" db="EMBL/GenBank/DDBJ databases">
        <title>Expression of the zebrafish tbx1 gene.</title>
        <authorList>
            <person name="Topczewski J."/>
            <person name="Solnica-Krezel L."/>
        </authorList>
    </citation>
    <scope>NUCLEOTIDE SEQUENCE [MRNA]</scope>
</reference>
<reference key="5">
    <citation type="submission" date="2006-04" db="EMBL/GenBank/DDBJ databases">
        <authorList>
            <consortium name="NIH - Zebrafish Gene Collection (ZGC) project"/>
        </authorList>
    </citation>
    <scope>NUCLEOTIDE SEQUENCE [LARGE SCALE MRNA]</scope>
</reference>
<gene>
    <name type="primary">tbx1</name>
    <name type="ORF">zgc:136724</name>
</gene>
<evidence type="ECO:0000250" key="1">
    <source>
        <dbReference type="UniProtKB" id="O43435"/>
    </source>
</evidence>
<evidence type="ECO:0000250" key="2">
    <source>
        <dbReference type="UniProtKB" id="P70323"/>
    </source>
</evidence>
<evidence type="ECO:0000255" key="3">
    <source>
        <dbReference type="PROSITE-ProRule" id="PRU00201"/>
    </source>
</evidence>
<evidence type="ECO:0000256" key="4">
    <source>
        <dbReference type="SAM" id="MobiDB-lite"/>
    </source>
</evidence>
<evidence type="ECO:0000269" key="5">
    <source>
    </source>
</evidence>
<evidence type="ECO:0000269" key="6">
    <source>
    </source>
</evidence>
<evidence type="ECO:0000305" key="7"/>
<comment type="function">
    <text evidence="1 2 5">Probable transcriptional regulator involved in developmental processes (By similarity). Binds to the palindromic T site 5'-TTCACACCTAGGTGTGAA-3' DNA sequence (By similarity). Is required for normal development of the pharyngeal arch arteries (By similarity). Acts cell autonomously in the pharyngeal mesendoderm and influences the development of neural crest-derived cartilages secondarily.</text>
</comment>
<comment type="subunit">
    <text evidence="1">Binds DNA as a dimer.</text>
</comment>
<comment type="subcellular location">
    <subcellularLocation>
        <location evidence="3">Nucleus</location>
    </subcellularLocation>
</comment>
<comment type="tissue specificity">
    <text evidence="5">Expressed in the ear and mesendodermal components of pharyngeal arches.</text>
</comment>
<comment type="developmental stage">
    <text evidence="6">Expression first detected at 5.0 hours post fertilization (hpf) in the dorsal blastoderm margin. Through the stage of embryonic shield formation, expression is restricted to the hypoblast, in the region of cells fated to become head and lateral plate mesoderm and pharyngeal endoderm. At 18 hpf, when the heart tube is beginning to assemble, three domains of expression can be seen: cardiac precursors, pharyngeal arch precursors and otic vesicle. These three domains remain the sites of expression to varying degrees through at least 72 hpf. By 51 hpf, expression can be seen in the cardiac outflow tract, the ventricle and the atrium, although by 72 hpf cardiac expression is strongest in the cardiac outflow tract.</text>
</comment>
<comment type="disruption phenotype">
    <text evidence="5">Fishes display defects in the ear, pharyngeal arches and associated structures such as the thymus.</text>
</comment>
<accession>Q8AXX2</accession>
<accession>Q7ZZB6</accession>
<protein>
    <recommendedName>
        <fullName>T-box transcription factor TBX1</fullName>
        <shortName>T-box protein 1</shortName>
    </recommendedName>
</protein>
<dbReference type="EMBL" id="AY277631">
    <property type="protein sequence ID" value="AAP33907.1"/>
    <property type="molecule type" value="mRNA"/>
</dbReference>
<dbReference type="EMBL" id="AY151388">
    <property type="protein sequence ID" value="AAN62482.1"/>
    <property type="molecule type" value="mRNA"/>
</dbReference>
<dbReference type="EMBL" id="AY294284">
    <property type="protein sequence ID" value="AAQ63169.1"/>
    <property type="molecule type" value="mRNA"/>
</dbReference>
<dbReference type="EMBL" id="AY197606">
    <property type="protein sequence ID" value="AAP37187.1"/>
    <property type="molecule type" value="mRNA"/>
</dbReference>
<dbReference type="EMBL" id="BC115243">
    <property type="protein sequence ID" value="AAI15244.1"/>
    <property type="molecule type" value="mRNA"/>
</dbReference>
<dbReference type="RefSeq" id="NP_899182.1">
    <property type="nucleotide sequence ID" value="NM_183339.1"/>
</dbReference>
<dbReference type="SMR" id="Q8AXX2"/>
<dbReference type="FunCoup" id="Q8AXX2">
    <property type="interactions" value="182"/>
</dbReference>
<dbReference type="STRING" id="7955.ENSDARP00000040825"/>
<dbReference type="PaxDb" id="7955-ENSDARP00000118808"/>
<dbReference type="Ensembl" id="ENSDART00000040826">
    <property type="protein sequence ID" value="ENSDARP00000040825"/>
    <property type="gene ID" value="ENSDARG00000031891"/>
</dbReference>
<dbReference type="GeneID" id="368206"/>
<dbReference type="KEGG" id="dre:368206"/>
<dbReference type="AGR" id="ZFIN:ZDB-GENE-030805-5"/>
<dbReference type="CTD" id="6899"/>
<dbReference type="ZFIN" id="ZDB-GENE-030805-5">
    <property type="gene designation" value="tbx1"/>
</dbReference>
<dbReference type="eggNOG" id="KOG3586">
    <property type="taxonomic scope" value="Eukaryota"/>
</dbReference>
<dbReference type="HOGENOM" id="CLU_014430_9_1_1"/>
<dbReference type="InParanoid" id="Q8AXX2"/>
<dbReference type="OrthoDB" id="7442607at2759"/>
<dbReference type="PhylomeDB" id="Q8AXX2"/>
<dbReference type="TreeFam" id="TF106341"/>
<dbReference type="PRO" id="PR:Q8AXX2"/>
<dbReference type="Proteomes" id="UP000000437">
    <property type="component" value="Chromosome 5"/>
</dbReference>
<dbReference type="Bgee" id="ENSDARG00000031891">
    <property type="expression patterns" value="Expressed in pharyngeal gill and 37 other cell types or tissues"/>
</dbReference>
<dbReference type="ExpressionAtlas" id="Q8AXX2">
    <property type="expression patterns" value="baseline and differential"/>
</dbReference>
<dbReference type="GO" id="GO:0000785">
    <property type="term" value="C:chromatin"/>
    <property type="evidence" value="ECO:0000318"/>
    <property type="project" value="GO_Central"/>
</dbReference>
<dbReference type="GO" id="GO:0005634">
    <property type="term" value="C:nucleus"/>
    <property type="evidence" value="ECO:0000250"/>
    <property type="project" value="UniProtKB"/>
</dbReference>
<dbReference type="GO" id="GO:0000981">
    <property type="term" value="F:DNA-binding transcription factor activity, RNA polymerase II-specific"/>
    <property type="evidence" value="ECO:0000318"/>
    <property type="project" value="GO_Central"/>
</dbReference>
<dbReference type="GO" id="GO:0042803">
    <property type="term" value="F:protein homodimerization activity"/>
    <property type="evidence" value="ECO:0000250"/>
    <property type="project" value="UniProtKB"/>
</dbReference>
<dbReference type="GO" id="GO:0000978">
    <property type="term" value="F:RNA polymerase II cis-regulatory region sequence-specific DNA binding"/>
    <property type="evidence" value="ECO:0000318"/>
    <property type="project" value="GO_Central"/>
</dbReference>
<dbReference type="GO" id="GO:0043565">
    <property type="term" value="F:sequence-specific DNA binding"/>
    <property type="evidence" value="ECO:0000250"/>
    <property type="project" value="UniProtKB"/>
</dbReference>
<dbReference type="GO" id="GO:0055007">
    <property type="term" value="P:cardiac muscle cell differentiation"/>
    <property type="evidence" value="ECO:0000315"/>
    <property type="project" value="ZFIN"/>
</dbReference>
<dbReference type="GO" id="GO:0060536">
    <property type="term" value="P:cartilage morphogenesis"/>
    <property type="evidence" value="ECO:0000315"/>
    <property type="project" value="ZFIN"/>
</dbReference>
<dbReference type="GO" id="GO:0001708">
    <property type="term" value="P:cell fate specification"/>
    <property type="evidence" value="ECO:0000318"/>
    <property type="project" value="GO_Central"/>
</dbReference>
<dbReference type="GO" id="GO:0043282">
    <property type="term" value="P:chordate pharyngeal muscle development"/>
    <property type="evidence" value="ECO:0000315"/>
    <property type="project" value="ZFIN"/>
</dbReference>
<dbReference type="GO" id="GO:0043583">
    <property type="term" value="P:ear development"/>
    <property type="evidence" value="ECO:0000315"/>
    <property type="project" value="ZFIN"/>
</dbReference>
<dbReference type="GO" id="GO:0042471">
    <property type="term" value="P:ear morphogenesis"/>
    <property type="evidence" value="ECO:0000315"/>
    <property type="project" value="ZFIN"/>
</dbReference>
<dbReference type="GO" id="GO:0003143">
    <property type="term" value="P:embryonic heart tube morphogenesis"/>
    <property type="evidence" value="ECO:0000315"/>
    <property type="project" value="ZFIN"/>
</dbReference>
<dbReference type="GO" id="GO:0048703">
    <property type="term" value="P:embryonic viscerocranium morphogenesis"/>
    <property type="evidence" value="ECO:0000250"/>
    <property type="project" value="UniProtKB"/>
</dbReference>
<dbReference type="GO" id="GO:0007507">
    <property type="term" value="P:heart development"/>
    <property type="evidence" value="ECO:0000250"/>
    <property type="project" value="UniProtKB"/>
</dbReference>
<dbReference type="GO" id="GO:0001947">
    <property type="term" value="P:heart looping"/>
    <property type="evidence" value="ECO:0000315"/>
    <property type="project" value="ZFIN"/>
</dbReference>
<dbReference type="GO" id="GO:0014032">
    <property type="term" value="P:neural crest cell development"/>
    <property type="evidence" value="ECO:0000315"/>
    <property type="project" value="ZFIN"/>
</dbReference>
<dbReference type="GO" id="GO:0001755">
    <property type="term" value="P:neural crest cell migration"/>
    <property type="evidence" value="ECO:0000315"/>
    <property type="project" value="ZFIN"/>
</dbReference>
<dbReference type="GO" id="GO:0060017">
    <property type="term" value="P:parathyroid gland development"/>
    <property type="evidence" value="ECO:0000250"/>
    <property type="project" value="UniProtKB"/>
</dbReference>
<dbReference type="GO" id="GO:0060037">
    <property type="term" value="P:pharyngeal system development"/>
    <property type="evidence" value="ECO:0000315"/>
    <property type="project" value="ZFIN"/>
</dbReference>
<dbReference type="GO" id="GO:0045893">
    <property type="term" value="P:positive regulation of DNA-templated transcription"/>
    <property type="evidence" value="ECO:0007669"/>
    <property type="project" value="InterPro"/>
</dbReference>
<dbReference type="GO" id="GO:0072513">
    <property type="term" value="P:positive regulation of secondary heart field cardioblast proliferation"/>
    <property type="evidence" value="ECO:0000315"/>
    <property type="project" value="ZFIN"/>
</dbReference>
<dbReference type="GO" id="GO:0006357">
    <property type="term" value="P:regulation of transcription by RNA polymerase II"/>
    <property type="evidence" value="ECO:0000318"/>
    <property type="project" value="GO_Central"/>
</dbReference>
<dbReference type="GO" id="GO:0048752">
    <property type="term" value="P:semicircular canal morphogenesis"/>
    <property type="evidence" value="ECO:0000315"/>
    <property type="project" value="ZFIN"/>
</dbReference>
<dbReference type="GO" id="GO:0060023">
    <property type="term" value="P:soft palate development"/>
    <property type="evidence" value="ECO:0000250"/>
    <property type="project" value="UniProtKB"/>
</dbReference>
<dbReference type="GO" id="GO:0048538">
    <property type="term" value="P:thymus development"/>
    <property type="evidence" value="ECO:0000250"/>
    <property type="project" value="UniProtKB"/>
</dbReference>
<dbReference type="CDD" id="cd20187">
    <property type="entry name" value="T-box_TBX1_10-like"/>
    <property type="match status" value="1"/>
</dbReference>
<dbReference type="FunFam" id="2.60.40.820:FF:000006">
    <property type="entry name" value="T-box transcription factor"/>
    <property type="match status" value="1"/>
</dbReference>
<dbReference type="Gene3D" id="2.60.40.820">
    <property type="entry name" value="Transcription factor, T-box"/>
    <property type="match status" value="1"/>
</dbReference>
<dbReference type="InterPro" id="IPR008967">
    <property type="entry name" value="p53-like_TF_DNA-bd_sf"/>
</dbReference>
<dbReference type="InterPro" id="IPR046360">
    <property type="entry name" value="T-box_DNA-bd"/>
</dbReference>
<dbReference type="InterPro" id="IPR036960">
    <property type="entry name" value="T-box_sf"/>
</dbReference>
<dbReference type="InterPro" id="IPR001699">
    <property type="entry name" value="TF_T-box"/>
</dbReference>
<dbReference type="InterPro" id="IPR018186">
    <property type="entry name" value="TF_T-box_CS"/>
</dbReference>
<dbReference type="PANTHER" id="PTHR11267">
    <property type="entry name" value="T-BOX PROTEIN-RELATED"/>
    <property type="match status" value="1"/>
</dbReference>
<dbReference type="PANTHER" id="PTHR11267:SF104">
    <property type="entry name" value="T-BOX TRANSCRIPTION FACTOR TBX1"/>
    <property type="match status" value="1"/>
</dbReference>
<dbReference type="Pfam" id="PF00907">
    <property type="entry name" value="T-box"/>
    <property type="match status" value="1"/>
</dbReference>
<dbReference type="PRINTS" id="PR00937">
    <property type="entry name" value="TBOX"/>
</dbReference>
<dbReference type="SMART" id="SM00425">
    <property type="entry name" value="TBOX"/>
    <property type="match status" value="1"/>
</dbReference>
<dbReference type="SUPFAM" id="SSF49417">
    <property type="entry name" value="p53-like transcription factors"/>
    <property type="match status" value="1"/>
</dbReference>
<dbReference type="PROSITE" id="PS01283">
    <property type="entry name" value="TBOX_1"/>
    <property type="match status" value="1"/>
</dbReference>
<dbReference type="PROSITE" id="PS01264">
    <property type="entry name" value="TBOX_2"/>
    <property type="match status" value="1"/>
</dbReference>
<dbReference type="PROSITE" id="PS50252">
    <property type="entry name" value="TBOX_3"/>
    <property type="match status" value="1"/>
</dbReference>
<name>TBX1_DANRE</name>
<organism>
    <name type="scientific">Danio rerio</name>
    <name type="common">Zebrafish</name>
    <name type="synonym">Brachydanio rerio</name>
    <dbReference type="NCBI Taxonomy" id="7955"/>
    <lineage>
        <taxon>Eukaryota</taxon>
        <taxon>Metazoa</taxon>
        <taxon>Chordata</taxon>
        <taxon>Craniata</taxon>
        <taxon>Vertebrata</taxon>
        <taxon>Euteleostomi</taxon>
        <taxon>Actinopterygii</taxon>
        <taxon>Neopterygii</taxon>
        <taxon>Teleostei</taxon>
        <taxon>Ostariophysi</taxon>
        <taxon>Cypriniformes</taxon>
        <taxon>Danionidae</taxon>
        <taxon>Danioninae</taxon>
        <taxon>Danio</taxon>
    </lineage>
</organism>